<proteinExistence type="inferred from homology"/>
<protein>
    <recommendedName>
        <fullName evidence="1">Zinc transporter ZupT</fullName>
    </recommendedName>
</protein>
<name>ZUPT_STRMK</name>
<evidence type="ECO:0000255" key="1">
    <source>
        <dbReference type="HAMAP-Rule" id="MF_00548"/>
    </source>
</evidence>
<dbReference type="EMBL" id="AM743169">
    <property type="protein sequence ID" value="CAQ46685.1"/>
    <property type="molecule type" value="Genomic_DNA"/>
</dbReference>
<dbReference type="RefSeq" id="WP_012480802.1">
    <property type="nucleotide sequence ID" value="NC_010943.1"/>
</dbReference>
<dbReference type="SMR" id="B2FM90"/>
<dbReference type="EnsemblBacteria" id="CAQ46685">
    <property type="protein sequence ID" value="CAQ46685"/>
    <property type="gene ID" value="Smlt3245"/>
</dbReference>
<dbReference type="KEGG" id="sml:Smlt3245"/>
<dbReference type="eggNOG" id="COG0428">
    <property type="taxonomic scope" value="Bacteria"/>
</dbReference>
<dbReference type="HOGENOM" id="CLU_015114_1_3_6"/>
<dbReference type="Proteomes" id="UP000008840">
    <property type="component" value="Chromosome"/>
</dbReference>
<dbReference type="GO" id="GO:0005886">
    <property type="term" value="C:plasma membrane"/>
    <property type="evidence" value="ECO:0007669"/>
    <property type="project" value="UniProtKB-SubCell"/>
</dbReference>
<dbReference type="GO" id="GO:0046872">
    <property type="term" value="F:metal ion binding"/>
    <property type="evidence" value="ECO:0007669"/>
    <property type="project" value="UniProtKB-KW"/>
</dbReference>
<dbReference type="GO" id="GO:0005385">
    <property type="term" value="F:zinc ion transmembrane transporter activity"/>
    <property type="evidence" value="ECO:0007669"/>
    <property type="project" value="UniProtKB-UniRule"/>
</dbReference>
<dbReference type="HAMAP" id="MF_00548">
    <property type="entry name" value="ZupT"/>
    <property type="match status" value="1"/>
</dbReference>
<dbReference type="InterPro" id="IPR003689">
    <property type="entry name" value="ZIP"/>
</dbReference>
<dbReference type="InterPro" id="IPR023498">
    <property type="entry name" value="Zn_transptr_ZupT"/>
</dbReference>
<dbReference type="NCBIfam" id="NF003243">
    <property type="entry name" value="PRK04201.1"/>
    <property type="match status" value="1"/>
</dbReference>
<dbReference type="PANTHER" id="PTHR11040:SF205">
    <property type="entry name" value="ZINC TRANSPORTER ZUPT"/>
    <property type="match status" value="1"/>
</dbReference>
<dbReference type="PANTHER" id="PTHR11040">
    <property type="entry name" value="ZINC/IRON TRANSPORTER"/>
    <property type="match status" value="1"/>
</dbReference>
<dbReference type="Pfam" id="PF02535">
    <property type="entry name" value="Zip"/>
    <property type="match status" value="1"/>
</dbReference>
<keyword id="KW-0997">Cell inner membrane</keyword>
<keyword id="KW-1003">Cell membrane</keyword>
<keyword id="KW-0406">Ion transport</keyword>
<keyword id="KW-0408">Iron</keyword>
<keyword id="KW-0472">Membrane</keyword>
<keyword id="KW-0479">Metal-binding</keyword>
<keyword id="KW-1185">Reference proteome</keyword>
<keyword id="KW-0812">Transmembrane</keyword>
<keyword id="KW-1133">Transmembrane helix</keyword>
<keyword id="KW-0813">Transport</keyword>
<keyword id="KW-0862">Zinc</keyword>
<keyword id="KW-0864">Zinc transport</keyword>
<reference key="1">
    <citation type="journal article" date="2008" name="Genome Biol.">
        <title>The complete genome, comparative and functional analysis of Stenotrophomonas maltophilia reveals an organism heavily shielded by drug resistance determinants.</title>
        <authorList>
            <person name="Crossman L.C."/>
            <person name="Gould V.C."/>
            <person name="Dow J.M."/>
            <person name="Vernikos G.S."/>
            <person name="Okazaki A."/>
            <person name="Sebaihia M."/>
            <person name="Saunders D."/>
            <person name="Arrowsmith C."/>
            <person name="Carver T."/>
            <person name="Peters N."/>
            <person name="Adlem E."/>
            <person name="Kerhornou A."/>
            <person name="Lord A."/>
            <person name="Murphy L."/>
            <person name="Seeger K."/>
            <person name="Squares R."/>
            <person name="Rutter S."/>
            <person name="Quail M.A."/>
            <person name="Rajandream M.A."/>
            <person name="Harris D."/>
            <person name="Churcher C."/>
            <person name="Bentley S.D."/>
            <person name="Parkhill J."/>
            <person name="Thomson N.R."/>
            <person name="Avison M.B."/>
        </authorList>
    </citation>
    <scope>NUCLEOTIDE SEQUENCE [LARGE SCALE GENOMIC DNA]</scope>
    <source>
        <strain>K279a</strain>
    </source>
</reference>
<sequence length="269" mass="28663">MLQIPPENVWIALAVTLAAGLATAIGSLLVLFSRRPNPRLLAFGLAFAGGAMVYVSLSEILNKSIASFALAYGERTGFTYGTLAFLAGVIVIVLIDHFIPNPHDSLDKQDPAFRENSREYLKRVALLTSVAITAHNFPEGLATFFATLESPSVGMPLAFAIAIHNIPEGIAIAVPVYFATQNKFYAFSASLLSGLAEPVGAALGYWLLSGSLSHATFGWVFGLIAGVMVFLALDELLPAAKRYAKGHETVYGLVAGMGTLAISLVLFKW</sequence>
<feature type="chain" id="PRO_1000128969" description="Zinc transporter ZupT">
    <location>
        <begin position="1"/>
        <end position="269"/>
    </location>
</feature>
<feature type="transmembrane region" description="Helical" evidence="1">
    <location>
        <begin position="11"/>
        <end position="31"/>
    </location>
</feature>
<feature type="transmembrane region" description="Helical" evidence="1">
    <location>
        <begin position="40"/>
        <end position="60"/>
    </location>
</feature>
<feature type="transmembrane region" description="Helical" evidence="1">
    <location>
        <begin position="80"/>
        <end position="100"/>
    </location>
</feature>
<feature type="transmembrane region" description="Helical" evidence="1">
    <location>
        <begin position="125"/>
        <end position="145"/>
    </location>
</feature>
<feature type="transmembrane region" description="Helical" evidence="1">
    <location>
        <begin position="158"/>
        <end position="178"/>
    </location>
</feature>
<feature type="transmembrane region" description="Helical" evidence="1">
    <location>
        <begin position="187"/>
        <end position="207"/>
    </location>
</feature>
<feature type="transmembrane region" description="Helical" evidence="1">
    <location>
        <begin position="217"/>
        <end position="237"/>
    </location>
</feature>
<feature type="transmembrane region" description="Helical" evidence="1">
    <location>
        <begin position="249"/>
        <end position="269"/>
    </location>
</feature>
<feature type="binding site" description="M2 metal binding site" evidence="1">
    <location>
        <position position="136"/>
    </location>
    <ligand>
        <name>Fe(2+)</name>
        <dbReference type="ChEBI" id="CHEBI:29033"/>
    </ligand>
</feature>
<feature type="binding site" description="M2 metal binding site" evidence="1">
    <location>
        <position position="139"/>
    </location>
    <ligand>
        <name>Fe(2+)</name>
        <dbReference type="ChEBI" id="CHEBI:29033"/>
    </ligand>
</feature>
<feature type="binding site" description="M1 metal binding site" evidence="1">
    <location>
        <position position="139"/>
    </location>
    <ligand>
        <name>Zn(2+)</name>
        <dbReference type="ChEBI" id="CHEBI:29105"/>
    </ligand>
</feature>
<feature type="binding site" description="M1 metal binding site" evidence="1">
    <location>
        <position position="164"/>
    </location>
    <ligand>
        <name>Zn(2+)</name>
        <dbReference type="ChEBI" id="CHEBI:29105"/>
    </ligand>
</feature>
<feature type="binding site" description="M2 metal binding site" evidence="1">
    <location>
        <position position="165"/>
    </location>
    <ligand>
        <name>Fe(2+)</name>
        <dbReference type="ChEBI" id="CHEBI:29033"/>
    </ligand>
</feature>
<feature type="binding site" description="M2 metal binding site" evidence="1">
    <location>
        <position position="168"/>
    </location>
    <ligand>
        <name>Fe(2+)</name>
        <dbReference type="ChEBI" id="CHEBI:29033"/>
    </ligand>
</feature>
<feature type="binding site" description="M1 metal binding site" evidence="1">
    <location>
        <position position="168"/>
    </location>
    <ligand>
        <name>Zn(2+)</name>
        <dbReference type="ChEBI" id="CHEBI:29105"/>
    </ligand>
</feature>
<feature type="binding site" description="M2 metal binding site" evidence="1">
    <location>
        <position position="197"/>
    </location>
    <ligand>
        <name>Fe(2+)</name>
        <dbReference type="ChEBI" id="CHEBI:29033"/>
    </ligand>
</feature>
<comment type="function">
    <text evidence="1">Mediates zinc uptake. May also transport other divalent cations.</text>
</comment>
<comment type="catalytic activity">
    <reaction evidence="1">
        <text>Zn(2+)(in) = Zn(2+)(out)</text>
        <dbReference type="Rhea" id="RHEA:29351"/>
        <dbReference type="ChEBI" id="CHEBI:29105"/>
    </reaction>
</comment>
<comment type="subcellular location">
    <subcellularLocation>
        <location evidence="1">Cell inner membrane</location>
        <topology evidence="1">Multi-pass membrane protein</topology>
    </subcellularLocation>
</comment>
<comment type="similarity">
    <text evidence="1">Belongs to the ZIP transporter (TC 2.A.5) family. ZupT subfamily.</text>
</comment>
<organism>
    <name type="scientific">Stenotrophomonas maltophilia (strain K279a)</name>
    <dbReference type="NCBI Taxonomy" id="522373"/>
    <lineage>
        <taxon>Bacteria</taxon>
        <taxon>Pseudomonadati</taxon>
        <taxon>Pseudomonadota</taxon>
        <taxon>Gammaproteobacteria</taxon>
        <taxon>Lysobacterales</taxon>
        <taxon>Lysobacteraceae</taxon>
        <taxon>Stenotrophomonas</taxon>
        <taxon>Stenotrophomonas maltophilia group</taxon>
    </lineage>
</organism>
<accession>B2FM90</accession>
<gene>
    <name evidence="1" type="primary">zupT</name>
    <name type="ordered locus">Smlt3245</name>
</gene>